<accession>P85049</accession>
<protein>
    <recommendedName>
        <fullName>Pregnancy-associated glycoprotein 70</fullName>
        <shortName>PAG 70</shortName>
        <ecNumber>3.4.23.-</ecNumber>
    </recommendedName>
</protein>
<name>PAG70_BUBBU</name>
<evidence type="ECO:0000250" key="1">
    <source>
        <dbReference type="UniProtKB" id="P84916"/>
    </source>
</evidence>
<evidence type="ECO:0000255" key="2"/>
<evidence type="ECO:0000269" key="3">
    <source>
    </source>
</evidence>
<sequence>RGSXLTILPLRNIID</sequence>
<comment type="subcellular location">
    <subcellularLocation>
        <location evidence="3">Secreted</location>
    </subcellularLocation>
</comment>
<comment type="tissue specificity">
    <text evidence="3">Expressed in chorionic epithelium (trophectoderm).</text>
</comment>
<comment type="developmental stage">
    <text evidence="3">Expressed during month 5 of pregnancy.</text>
</comment>
<comment type="PTM">
    <text evidence="1">N-glycosylated.</text>
</comment>
<comment type="similarity">
    <text evidence="2">Belongs to the peptidase A1 family.</text>
</comment>
<organism>
    <name type="scientific">Bubalus bubalis</name>
    <name type="common">Domestic water buffalo</name>
    <dbReference type="NCBI Taxonomy" id="89462"/>
    <lineage>
        <taxon>Eukaryota</taxon>
        <taxon>Metazoa</taxon>
        <taxon>Chordata</taxon>
        <taxon>Craniata</taxon>
        <taxon>Vertebrata</taxon>
        <taxon>Euteleostomi</taxon>
        <taxon>Mammalia</taxon>
        <taxon>Eutheria</taxon>
        <taxon>Laurasiatheria</taxon>
        <taxon>Artiodactyla</taxon>
        <taxon>Ruminantia</taxon>
        <taxon>Pecora</taxon>
        <taxon>Bovidae</taxon>
        <taxon>Bovinae</taxon>
        <taxon>Bubalus</taxon>
    </lineage>
</organism>
<dbReference type="EC" id="3.4.23.-"/>
<dbReference type="GO" id="GO:0005576">
    <property type="term" value="C:extracellular region"/>
    <property type="evidence" value="ECO:0007669"/>
    <property type="project" value="UniProtKB-SubCell"/>
</dbReference>
<dbReference type="GO" id="GO:0004190">
    <property type="term" value="F:aspartic-type endopeptidase activity"/>
    <property type="evidence" value="ECO:0007669"/>
    <property type="project" value="UniProtKB-KW"/>
</dbReference>
<dbReference type="GO" id="GO:0006508">
    <property type="term" value="P:proteolysis"/>
    <property type="evidence" value="ECO:0007669"/>
    <property type="project" value="UniProtKB-KW"/>
</dbReference>
<feature type="chain" id="PRO_0000271229" description="Pregnancy-associated glycoprotein 70">
    <location>
        <begin position="1"/>
        <end position="15" status="greater than"/>
    </location>
</feature>
<feature type="non-terminal residue">
    <location>
        <position position="15"/>
    </location>
</feature>
<proteinExistence type="evidence at protein level"/>
<keyword id="KW-0064">Aspartyl protease</keyword>
<keyword id="KW-0903">Direct protein sequencing</keyword>
<keyword id="KW-0325">Glycoprotein</keyword>
<keyword id="KW-0378">Hydrolase</keyword>
<keyword id="KW-0645">Protease</keyword>
<keyword id="KW-0964">Secreted</keyword>
<reference key="1">
    <citation type="journal article" date="2008" name="Res. Vet. Sci.">
        <title>Isolation of new pregnancy-associated glycoproteins from water buffalo (Bubalus bubalis) placenta by Vicia villosa affinity chromatography.</title>
        <authorList>
            <person name="Barbato O."/>
            <person name="Sousa N.M."/>
            <person name="Klisch K."/>
            <person name="Clerget E."/>
            <person name="Debenedetti A."/>
            <person name="Barile V.L."/>
            <person name="Malfatti A."/>
            <person name="Beckers J.F."/>
        </authorList>
    </citation>
    <scope>PROTEIN SEQUENCE</scope>
    <scope>SUBCELLULAR LOCATION</scope>
    <scope>TISSUE SPECIFICITY</scope>
    <scope>DEVELOPMENTAL STAGE</scope>
    <source>
        <tissue>Trophectoderm</tissue>
    </source>
</reference>